<gene>
    <name type="primary">NFIB</name>
</gene>
<name>NFIB_BOVIN</name>
<dbReference type="EMBL" id="BC120107">
    <property type="protein sequence ID" value="AAI20108.1"/>
    <property type="molecule type" value="mRNA"/>
</dbReference>
<dbReference type="RefSeq" id="NP_001069572.1">
    <property type="nucleotide sequence ID" value="NM_001076104.2"/>
</dbReference>
<dbReference type="SMR" id="Q0VCL6"/>
<dbReference type="FunCoup" id="Q0VCL6">
    <property type="interactions" value="870"/>
</dbReference>
<dbReference type="STRING" id="9913.ENSBTAP00000011234"/>
<dbReference type="PaxDb" id="9913-ENSBTAP00000011234"/>
<dbReference type="Ensembl" id="ENSBTAT00000075331.1">
    <property type="protein sequence ID" value="ENSBTAP00000063855.1"/>
    <property type="gene ID" value="ENSBTAG00000027442.6"/>
</dbReference>
<dbReference type="GeneID" id="538474"/>
<dbReference type="KEGG" id="bta:538474"/>
<dbReference type="CTD" id="4781"/>
<dbReference type="VEuPathDB" id="HostDB:ENSBTAG00000027442"/>
<dbReference type="VGNC" id="VGNC:32039">
    <property type="gene designation" value="NFIB"/>
</dbReference>
<dbReference type="eggNOG" id="KOG3663">
    <property type="taxonomic scope" value="Eukaryota"/>
</dbReference>
<dbReference type="GeneTree" id="ENSGT00950000182916"/>
<dbReference type="InParanoid" id="Q0VCL6"/>
<dbReference type="OrthoDB" id="10055441at2759"/>
<dbReference type="ChiTaRS" id="NFIB">
    <property type="organism name" value="cattle"/>
</dbReference>
<dbReference type="Proteomes" id="UP000009136">
    <property type="component" value="Chromosome 8"/>
</dbReference>
<dbReference type="Bgee" id="ENSBTAG00000027442">
    <property type="expression patterns" value="Expressed in intramuscular adipose tissue and 108 other cell types or tissues"/>
</dbReference>
<dbReference type="GO" id="GO:0044300">
    <property type="term" value="C:cerebellar mossy fiber"/>
    <property type="evidence" value="ECO:0000250"/>
    <property type="project" value="UniProtKB"/>
</dbReference>
<dbReference type="GO" id="GO:0005634">
    <property type="term" value="C:nucleus"/>
    <property type="evidence" value="ECO:0000250"/>
    <property type="project" value="UniProtKB"/>
</dbReference>
<dbReference type="GO" id="GO:0003677">
    <property type="term" value="F:DNA binding"/>
    <property type="evidence" value="ECO:0000250"/>
    <property type="project" value="UniProtKB"/>
</dbReference>
<dbReference type="GO" id="GO:0000981">
    <property type="term" value="F:DNA-binding transcription factor activity, RNA polymerase II-specific"/>
    <property type="evidence" value="ECO:0000250"/>
    <property type="project" value="UniProtKB"/>
</dbReference>
<dbReference type="GO" id="GO:0000978">
    <property type="term" value="F:RNA polymerase II cis-regulatory region sequence-specific DNA binding"/>
    <property type="evidence" value="ECO:0000318"/>
    <property type="project" value="GO_Central"/>
</dbReference>
<dbReference type="GO" id="GO:0021960">
    <property type="term" value="P:anterior commissure morphogenesis"/>
    <property type="evidence" value="ECO:0000250"/>
    <property type="project" value="UniProtKB"/>
</dbReference>
<dbReference type="GO" id="GO:0002062">
    <property type="term" value="P:chondrocyte differentiation"/>
    <property type="evidence" value="ECO:0000250"/>
    <property type="project" value="UniProtKB"/>
</dbReference>
<dbReference type="GO" id="GO:0060486">
    <property type="term" value="P:club cell differentiation"/>
    <property type="evidence" value="ECO:0000250"/>
    <property type="project" value="UniProtKB"/>
</dbReference>
<dbReference type="GO" id="GO:0071679">
    <property type="term" value="P:commissural neuron axon guidance"/>
    <property type="evidence" value="ECO:0000250"/>
    <property type="project" value="UniProtKB"/>
</dbReference>
<dbReference type="GO" id="GO:0006260">
    <property type="term" value="P:DNA replication"/>
    <property type="evidence" value="ECO:0007669"/>
    <property type="project" value="UniProtKB-KW"/>
</dbReference>
<dbReference type="GO" id="GO:0010001">
    <property type="term" value="P:glial cell differentiation"/>
    <property type="evidence" value="ECO:0000250"/>
    <property type="project" value="UniProtKB"/>
</dbReference>
<dbReference type="GO" id="GO:0061141">
    <property type="term" value="P:lung ciliated cell differentiation"/>
    <property type="evidence" value="ECO:0000250"/>
    <property type="project" value="UniProtKB"/>
</dbReference>
<dbReference type="GO" id="GO:2000795">
    <property type="term" value="P:negative regulation of epithelial cell proliferation involved in lung morphogenesis"/>
    <property type="evidence" value="ECO:0000250"/>
    <property type="project" value="UniProtKB"/>
</dbReference>
<dbReference type="GO" id="GO:2000791">
    <property type="term" value="P:negative regulation of mesenchymal cell proliferation involved in lung development"/>
    <property type="evidence" value="ECO:0000250"/>
    <property type="project" value="UniProtKB"/>
</dbReference>
<dbReference type="GO" id="GO:0045944">
    <property type="term" value="P:positive regulation of transcription by RNA polymerase II"/>
    <property type="evidence" value="ECO:0000250"/>
    <property type="project" value="UniProtKB"/>
</dbReference>
<dbReference type="GO" id="GO:0021740">
    <property type="term" value="P:principal sensory nucleus of trigeminal nerve development"/>
    <property type="evidence" value="ECO:0000250"/>
    <property type="project" value="UniProtKB"/>
</dbReference>
<dbReference type="GO" id="GO:0006357">
    <property type="term" value="P:regulation of transcription by RNA polymerase II"/>
    <property type="evidence" value="ECO:0000318"/>
    <property type="project" value="GO_Central"/>
</dbReference>
<dbReference type="GO" id="GO:0060509">
    <property type="term" value="P:type I pneumocyte differentiation"/>
    <property type="evidence" value="ECO:0000250"/>
    <property type="project" value="UniProtKB"/>
</dbReference>
<dbReference type="GO" id="GO:0060510">
    <property type="term" value="P:type II pneumocyte differentiation"/>
    <property type="evidence" value="ECO:0000250"/>
    <property type="project" value="UniProtKB"/>
</dbReference>
<dbReference type="InterPro" id="IPR000647">
    <property type="entry name" value="CTF/NFI"/>
</dbReference>
<dbReference type="InterPro" id="IPR020604">
    <property type="entry name" value="CTF/NFI_DNA-bd-dom"/>
</dbReference>
<dbReference type="InterPro" id="IPR019739">
    <property type="entry name" value="CTF/NFI_DNA-bd_CS"/>
</dbReference>
<dbReference type="InterPro" id="IPR019548">
    <property type="entry name" value="CTF/NFI_DNA-bd_N"/>
</dbReference>
<dbReference type="InterPro" id="IPR003619">
    <property type="entry name" value="MAD_homology1_Dwarfin-type"/>
</dbReference>
<dbReference type="PANTHER" id="PTHR11492:SF4">
    <property type="entry name" value="NUCLEAR FACTOR 1 B-TYPE"/>
    <property type="match status" value="1"/>
</dbReference>
<dbReference type="PANTHER" id="PTHR11492">
    <property type="entry name" value="NUCLEAR FACTOR I"/>
    <property type="match status" value="1"/>
</dbReference>
<dbReference type="Pfam" id="PF00859">
    <property type="entry name" value="CTF_NFI"/>
    <property type="match status" value="1"/>
</dbReference>
<dbReference type="Pfam" id="PF03165">
    <property type="entry name" value="MH1"/>
    <property type="match status" value="1"/>
</dbReference>
<dbReference type="Pfam" id="PF10524">
    <property type="entry name" value="NfI_DNAbd_pre-N"/>
    <property type="match status" value="1"/>
</dbReference>
<dbReference type="SMART" id="SM00523">
    <property type="entry name" value="DWA"/>
    <property type="match status" value="1"/>
</dbReference>
<dbReference type="PROSITE" id="PS00349">
    <property type="entry name" value="CTF_NFI_1"/>
    <property type="match status" value="1"/>
</dbReference>
<dbReference type="PROSITE" id="PS51080">
    <property type="entry name" value="CTF_NFI_2"/>
    <property type="match status" value="1"/>
</dbReference>
<sequence length="420" mass="47499">MMYSPICLTQDEFHPFIEALLPHVRAIAYTWFNLQARKRKYFKKHEKRMSKDEERAVKDELLSEKPEIKQKWASRLLAKLRKDIRQEYREDFVLTVTGKKHPCCVLSNPDQKGKIRRIDCLRQADKVWRLDLVMVILFKGIPLESTDGERLMKSPHCTNPALCVQPHHITVSVKELDLFLAYYVQEQDSGQSGSPSHNDPAKNPPGYLEDSFVKSGVFNVSELVRVSRTPITQGTGVNFPIGEIPSQPYYHDMNSGVNLQRSLSSPPSSKRPKTISIDENMEPSPTGDFYPSPNSPAAGSRTWHERDQDMSSPTTMKKPEKPLFSSTSPQDSSPRLSTFPQHHHPGIPGVAHSVISTRTPPPPSPLPFPTQAILPPAPSSYFSHPTIRYPPHLNPQDTLKNYVPSYDPSSPQTSQSWYLG</sequence>
<protein>
    <recommendedName>
        <fullName>Nuclear factor 1 B-type</fullName>
        <shortName>NF1-B</shortName>
        <shortName>Nuclear factor 1/B</shortName>
    </recommendedName>
    <alternativeName>
        <fullName>Nuclear factor I/B</fullName>
        <shortName>NF-I/B</shortName>
        <shortName>NFI-B</shortName>
    </alternativeName>
</protein>
<proteinExistence type="evidence at transcript level"/>
<reference key="1">
    <citation type="submission" date="2006-08" db="EMBL/GenBank/DDBJ databases">
        <authorList>
            <consortium name="NIH - Mammalian Gene Collection (MGC) project"/>
        </authorList>
    </citation>
    <scope>NUCLEOTIDE SEQUENCE [LARGE SCALE MRNA]</scope>
    <source>
        <strain>Hereford</strain>
        <tissue>Fetal pons</tissue>
    </source>
</reference>
<organism>
    <name type="scientific">Bos taurus</name>
    <name type="common">Bovine</name>
    <dbReference type="NCBI Taxonomy" id="9913"/>
    <lineage>
        <taxon>Eukaryota</taxon>
        <taxon>Metazoa</taxon>
        <taxon>Chordata</taxon>
        <taxon>Craniata</taxon>
        <taxon>Vertebrata</taxon>
        <taxon>Euteleostomi</taxon>
        <taxon>Mammalia</taxon>
        <taxon>Eutheria</taxon>
        <taxon>Laurasiatheria</taxon>
        <taxon>Artiodactyla</taxon>
        <taxon>Ruminantia</taxon>
        <taxon>Pecora</taxon>
        <taxon>Bovidae</taxon>
        <taxon>Bovinae</taxon>
        <taxon>Bos</taxon>
    </lineage>
</organism>
<accession>Q0VCL6</accession>
<comment type="function">
    <text evidence="3">Transcriptional activator of GFAP, essential for proper brain development. Recognizes and binds the palindromic sequence 5'-TTGGCNNNNNGCCAA-3' present in viral and cellular promoters and in the origin of replication of adenovirus type 2. These proteins are individually capable of activating transcription and replication.</text>
</comment>
<comment type="subunit">
    <text evidence="1">Binds DNA as a homodimer.</text>
</comment>
<comment type="subcellular location">
    <subcellularLocation>
        <location evidence="4">Nucleus</location>
    </subcellularLocation>
</comment>
<comment type="domain">
    <text evidence="2">The 9aaTAD motif is a transactivation domain present in a large number of yeast and animal transcription factors.</text>
</comment>
<comment type="similarity">
    <text evidence="4">Belongs to the CTF/NF-I family.</text>
</comment>
<feature type="chain" id="PRO_0000273723" description="Nuclear factor 1 B-type">
    <location>
        <begin position="1"/>
        <end position="420"/>
    </location>
</feature>
<feature type="DNA-binding region" description="CTF/NF-I" evidence="4">
    <location>
        <begin position="2"/>
        <end position="195"/>
    </location>
</feature>
<feature type="region of interest" description="Disordered" evidence="5">
    <location>
        <begin position="189"/>
        <end position="208"/>
    </location>
</feature>
<feature type="region of interest" description="Disordered" evidence="5">
    <location>
        <begin position="252"/>
        <end position="420"/>
    </location>
</feature>
<feature type="short sequence motif" description="9aaTAD" evidence="2">
    <location>
        <begin position="397"/>
        <end position="405"/>
    </location>
</feature>
<feature type="compositionally biased region" description="Polar residues" evidence="5">
    <location>
        <begin position="324"/>
        <end position="340"/>
    </location>
</feature>
<feature type="compositionally biased region" description="Pro residues" evidence="5">
    <location>
        <begin position="359"/>
        <end position="368"/>
    </location>
</feature>
<feature type="compositionally biased region" description="Polar residues" evidence="5">
    <location>
        <begin position="407"/>
        <end position="420"/>
    </location>
</feature>
<feature type="modified residue" description="Phosphoserine" evidence="2">
    <location>
        <position position="264"/>
    </location>
</feature>
<feature type="modified residue" description="Phosphothreonine" evidence="3">
    <location>
        <position position="286"/>
    </location>
</feature>
<feature type="modified residue" description="Phosphoserine" evidence="2">
    <location>
        <position position="292"/>
    </location>
</feature>
<feature type="modified residue" description="Phosphoserine" evidence="2">
    <location>
        <position position="295"/>
    </location>
</feature>
<feature type="modified residue" description="Phosphoserine" evidence="2">
    <location>
        <position position="312"/>
    </location>
</feature>
<feature type="modified residue" description="Phosphoserine" evidence="2">
    <location>
        <position position="328"/>
    </location>
</feature>
<feature type="modified residue" description="Phosphoserine" evidence="2">
    <location>
        <position position="333"/>
    </location>
</feature>
<feature type="modified residue" description="Asymmetric dimethylarginine" evidence="3">
    <location>
        <position position="335"/>
    </location>
</feature>
<feature type="modified residue" description="Asymmetric dimethylarginine" evidence="3">
    <location>
        <position position="388"/>
    </location>
</feature>
<keyword id="KW-0010">Activator</keyword>
<keyword id="KW-0235">DNA replication</keyword>
<keyword id="KW-0238">DNA-binding</keyword>
<keyword id="KW-0488">Methylation</keyword>
<keyword id="KW-0539">Nucleus</keyword>
<keyword id="KW-0597">Phosphoprotein</keyword>
<keyword id="KW-1185">Reference proteome</keyword>
<keyword id="KW-0804">Transcription</keyword>
<keyword id="KW-0805">Transcription regulation</keyword>
<evidence type="ECO:0000250" key="1"/>
<evidence type="ECO:0000250" key="2">
    <source>
        <dbReference type="UniProtKB" id="O00712"/>
    </source>
</evidence>
<evidence type="ECO:0000250" key="3">
    <source>
        <dbReference type="UniProtKB" id="P97863"/>
    </source>
</evidence>
<evidence type="ECO:0000255" key="4">
    <source>
        <dbReference type="PROSITE-ProRule" id="PRU00436"/>
    </source>
</evidence>
<evidence type="ECO:0000256" key="5">
    <source>
        <dbReference type="SAM" id="MobiDB-lite"/>
    </source>
</evidence>